<evidence type="ECO:0000255" key="1">
    <source>
        <dbReference type="HAMAP-Rule" id="MF_00139"/>
    </source>
</evidence>
<evidence type="ECO:0000255" key="2">
    <source>
        <dbReference type="PROSITE-ProRule" id="PRU01202"/>
    </source>
</evidence>
<name>PUR9_JANSC</name>
<keyword id="KW-0378">Hydrolase</keyword>
<keyword id="KW-0511">Multifunctional enzyme</keyword>
<keyword id="KW-0658">Purine biosynthesis</keyword>
<keyword id="KW-1185">Reference proteome</keyword>
<keyword id="KW-0808">Transferase</keyword>
<protein>
    <recommendedName>
        <fullName evidence="1">Bifunctional purine biosynthesis protein PurH</fullName>
    </recommendedName>
    <domain>
        <recommendedName>
            <fullName evidence="1">Phosphoribosylaminoimidazolecarboxamide formyltransferase</fullName>
            <ecNumber evidence="1">2.1.2.3</ecNumber>
        </recommendedName>
        <alternativeName>
            <fullName evidence="1">AICAR transformylase</fullName>
        </alternativeName>
    </domain>
    <domain>
        <recommendedName>
            <fullName evidence="1">IMP cyclohydrolase</fullName>
            <ecNumber evidence="1">3.5.4.10</ecNumber>
        </recommendedName>
        <alternativeName>
            <fullName evidence="1">ATIC</fullName>
        </alternativeName>
        <alternativeName>
            <fullName evidence="1">IMP synthase</fullName>
        </alternativeName>
        <alternativeName>
            <fullName evidence="1">Inosinicase</fullName>
        </alternativeName>
    </domain>
</protein>
<organism>
    <name type="scientific">Jannaschia sp. (strain CCS1)</name>
    <dbReference type="NCBI Taxonomy" id="290400"/>
    <lineage>
        <taxon>Bacteria</taxon>
        <taxon>Pseudomonadati</taxon>
        <taxon>Pseudomonadota</taxon>
        <taxon>Alphaproteobacteria</taxon>
        <taxon>Rhodobacterales</taxon>
        <taxon>Roseobacteraceae</taxon>
        <taxon>Jannaschia</taxon>
    </lineage>
</organism>
<feature type="chain" id="PRO_1000057898" description="Bifunctional purine biosynthesis protein PurH">
    <location>
        <begin position="1"/>
        <end position="532"/>
    </location>
</feature>
<feature type="domain" description="MGS-like" evidence="2">
    <location>
        <begin position="1"/>
        <end position="149"/>
    </location>
</feature>
<sequence length="532" mass="55404">MTDPAPLTRALLSVSDKTGLIEFATDLSSRGVELLSTGGTAKALREAGLDVRDVSEVTGFPEMMDGRVKTLHPMIHGGLLALRDNDAHVAAMKEHGIGAIDLLVVNLYPFEATVAAGADYDTCIENIDIGGPAMIRAAAKNHGAVTVLTDSSQYAGLLSELDANANKGGGTSFQFRQRMAQAAYGRTAAYDAAVSSWMAGAAEIKTPPHRAFAGSLAQEMRYGENPHQKAAFYLDGSSRPGVATAQQHQGKALSYNNINDTDAAFELVSEFAPDDGPAVAIIKHANPSGVARGNSLAEAYKAAFDCDRTSAFGGIVALNQTLDAATAEEIVQIFTEVVIAPDADEDAKAIFAAKKNLRLLTTGGLPDPRAPMVAYKQVAGGLLVQDKDTGHVDPELLEVVTKRAPSAQELADLRFAWTVAKHTKSNAIIYAKGGATVGIGAGQMSRVDSSTIAALKAARMGTECGMADTPAKGSVVASDAFFPFADGLLAAAEAGATAVIQPGGSMRDADVIAAADEAGLAMVFTGMRHFRH</sequence>
<proteinExistence type="inferred from homology"/>
<reference key="1">
    <citation type="submission" date="2006-02" db="EMBL/GenBank/DDBJ databases">
        <title>Complete sequence of chromosome of Jannaschia sp. CCS1.</title>
        <authorList>
            <consortium name="US DOE Joint Genome Institute"/>
            <person name="Copeland A."/>
            <person name="Lucas S."/>
            <person name="Lapidus A."/>
            <person name="Barry K."/>
            <person name="Detter J.C."/>
            <person name="Glavina del Rio T."/>
            <person name="Hammon N."/>
            <person name="Israni S."/>
            <person name="Pitluck S."/>
            <person name="Brettin T."/>
            <person name="Bruce D."/>
            <person name="Han C."/>
            <person name="Tapia R."/>
            <person name="Gilna P."/>
            <person name="Chertkov O."/>
            <person name="Saunders E."/>
            <person name="Schmutz J."/>
            <person name="Larimer F."/>
            <person name="Land M."/>
            <person name="Kyrpides N."/>
            <person name="Lykidis A."/>
            <person name="Moran M.A."/>
            <person name="Belas R."/>
            <person name="Ye W."/>
            <person name="Buchan A."/>
            <person name="Gonzalez J.M."/>
            <person name="Schell M.A."/>
            <person name="Richardson P."/>
        </authorList>
    </citation>
    <scope>NUCLEOTIDE SEQUENCE [LARGE SCALE GENOMIC DNA]</scope>
    <source>
        <strain>CCS1</strain>
    </source>
</reference>
<gene>
    <name evidence="1" type="primary">purH</name>
    <name type="ordered locus">Jann_4042</name>
</gene>
<accession>Q28K03</accession>
<comment type="catalytic activity">
    <reaction evidence="1">
        <text>(6R)-10-formyltetrahydrofolate + 5-amino-1-(5-phospho-beta-D-ribosyl)imidazole-4-carboxamide = 5-formamido-1-(5-phospho-D-ribosyl)imidazole-4-carboxamide + (6S)-5,6,7,8-tetrahydrofolate</text>
        <dbReference type="Rhea" id="RHEA:22192"/>
        <dbReference type="ChEBI" id="CHEBI:57453"/>
        <dbReference type="ChEBI" id="CHEBI:58467"/>
        <dbReference type="ChEBI" id="CHEBI:58475"/>
        <dbReference type="ChEBI" id="CHEBI:195366"/>
        <dbReference type="EC" id="2.1.2.3"/>
    </reaction>
</comment>
<comment type="catalytic activity">
    <reaction evidence="1">
        <text>IMP + H2O = 5-formamido-1-(5-phospho-D-ribosyl)imidazole-4-carboxamide</text>
        <dbReference type="Rhea" id="RHEA:18445"/>
        <dbReference type="ChEBI" id="CHEBI:15377"/>
        <dbReference type="ChEBI" id="CHEBI:58053"/>
        <dbReference type="ChEBI" id="CHEBI:58467"/>
        <dbReference type="EC" id="3.5.4.10"/>
    </reaction>
</comment>
<comment type="pathway">
    <text evidence="1">Purine metabolism; IMP biosynthesis via de novo pathway; 5-formamido-1-(5-phospho-D-ribosyl)imidazole-4-carboxamide from 5-amino-1-(5-phospho-D-ribosyl)imidazole-4-carboxamide (10-formyl THF route): step 1/1.</text>
</comment>
<comment type="pathway">
    <text evidence="1">Purine metabolism; IMP biosynthesis via de novo pathway; IMP from 5-formamido-1-(5-phospho-D-ribosyl)imidazole-4-carboxamide: step 1/1.</text>
</comment>
<comment type="domain">
    <text evidence="1">The IMP cyclohydrolase activity resides in the N-terminal region.</text>
</comment>
<comment type="similarity">
    <text evidence="1">Belongs to the PurH family.</text>
</comment>
<dbReference type="EC" id="2.1.2.3" evidence="1"/>
<dbReference type="EC" id="3.5.4.10" evidence="1"/>
<dbReference type="EMBL" id="CP000264">
    <property type="protein sequence ID" value="ABD56959.1"/>
    <property type="molecule type" value="Genomic_DNA"/>
</dbReference>
<dbReference type="RefSeq" id="WP_011457155.1">
    <property type="nucleotide sequence ID" value="NC_007802.1"/>
</dbReference>
<dbReference type="SMR" id="Q28K03"/>
<dbReference type="STRING" id="290400.Jann_4042"/>
<dbReference type="KEGG" id="jan:Jann_4042"/>
<dbReference type="eggNOG" id="COG0138">
    <property type="taxonomic scope" value="Bacteria"/>
</dbReference>
<dbReference type="HOGENOM" id="CLU_016316_5_2_5"/>
<dbReference type="OrthoDB" id="9802065at2"/>
<dbReference type="UniPathway" id="UPA00074">
    <property type="reaction ID" value="UER00133"/>
</dbReference>
<dbReference type="UniPathway" id="UPA00074">
    <property type="reaction ID" value="UER00135"/>
</dbReference>
<dbReference type="Proteomes" id="UP000008326">
    <property type="component" value="Chromosome"/>
</dbReference>
<dbReference type="GO" id="GO:0005829">
    <property type="term" value="C:cytosol"/>
    <property type="evidence" value="ECO:0007669"/>
    <property type="project" value="TreeGrafter"/>
</dbReference>
<dbReference type="GO" id="GO:0003937">
    <property type="term" value="F:IMP cyclohydrolase activity"/>
    <property type="evidence" value="ECO:0007669"/>
    <property type="project" value="UniProtKB-UniRule"/>
</dbReference>
<dbReference type="GO" id="GO:0004643">
    <property type="term" value="F:phosphoribosylaminoimidazolecarboxamide formyltransferase activity"/>
    <property type="evidence" value="ECO:0007669"/>
    <property type="project" value="UniProtKB-UniRule"/>
</dbReference>
<dbReference type="GO" id="GO:0006189">
    <property type="term" value="P:'de novo' IMP biosynthetic process"/>
    <property type="evidence" value="ECO:0007669"/>
    <property type="project" value="UniProtKB-UniRule"/>
</dbReference>
<dbReference type="CDD" id="cd01421">
    <property type="entry name" value="IMPCH"/>
    <property type="match status" value="1"/>
</dbReference>
<dbReference type="FunFam" id="3.40.140.20:FF:000001">
    <property type="entry name" value="Bifunctional purine biosynthesis protein PurH"/>
    <property type="match status" value="1"/>
</dbReference>
<dbReference type="FunFam" id="3.40.140.20:FF:000002">
    <property type="entry name" value="Bifunctional purine biosynthesis protein PurH"/>
    <property type="match status" value="1"/>
</dbReference>
<dbReference type="FunFam" id="3.40.50.1380:FF:000001">
    <property type="entry name" value="Bifunctional purine biosynthesis protein PurH"/>
    <property type="match status" value="1"/>
</dbReference>
<dbReference type="Gene3D" id="3.40.140.20">
    <property type="match status" value="2"/>
</dbReference>
<dbReference type="Gene3D" id="3.40.50.1380">
    <property type="entry name" value="Methylglyoxal synthase-like domain"/>
    <property type="match status" value="1"/>
</dbReference>
<dbReference type="HAMAP" id="MF_00139">
    <property type="entry name" value="PurH"/>
    <property type="match status" value="1"/>
</dbReference>
<dbReference type="InterPro" id="IPR024051">
    <property type="entry name" value="AICAR_Tfase_dup_dom_sf"/>
</dbReference>
<dbReference type="InterPro" id="IPR016193">
    <property type="entry name" value="Cytidine_deaminase-like"/>
</dbReference>
<dbReference type="InterPro" id="IPR011607">
    <property type="entry name" value="MGS-like_dom"/>
</dbReference>
<dbReference type="InterPro" id="IPR036914">
    <property type="entry name" value="MGS-like_dom_sf"/>
</dbReference>
<dbReference type="InterPro" id="IPR002695">
    <property type="entry name" value="PurH-like"/>
</dbReference>
<dbReference type="NCBIfam" id="NF002049">
    <property type="entry name" value="PRK00881.1"/>
    <property type="match status" value="1"/>
</dbReference>
<dbReference type="NCBIfam" id="TIGR00355">
    <property type="entry name" value="purH"/>
    <property type="match status" value="1"/>
</dbReference>
<dbReference type="PANTHER" id="PTHR11692:SF0">
    <property type="entry name" value="BIFUNCTIONAL PURINE BIOSYNTHESIS PROTEIN ATIC"/>
    <property type="match status" value="1"/>
</dbReference>
<dbReference type="PANTHER" id="PTHR11692">
    <property type="entry name" value="BIFUNCTIONAL PURINE BIOSYNTHESIS PROTEIN PURH"/>
    <property type="match status" value="1"/>
</dbReference>
<dbReference type="Pfam" id="PF01808">
    <property type="entry name" value="AICARFT_IMPCHas"/>
    <property type="match status" value="1"/>
</dbReference>
<dbReference type="Pfam" id="PF02142">
    <property type="entry name" value="MGS"/>
    <property type="match status" value="1"/>
</dbReference>
<dbReference type="PIRSF" id="PIRSF000414">
    <property type="entry name" value="AICARFT_IMPCHas"/>
    <property type="match status" value="1"/>
</dbReference>
<dbReference type="SMART" id="SM00798">
    <property type="entry name" value="AICARFT_IMPCHas"/>
    <property type="match status" value="1"/>
</dbReference>
<dbReference type="SMART" id="SM00851">
    <property type="entry name" value="MGS"/>
    <property type="match status" value="1"/>
</dbReference>
<dbReference type="SUPFAM" id="SSF53927">
    <property type="entry name" value="Cytidine deaminase-like"/>
    <property type="match status" value="1"/>
</dbReference>
<dbReference type="SUPFAM" id="SSF52335">
    <property type="entry name" value="Methylglyoxal synthase-like"/>
    <property type="match status" value="1"/>
</dbReference>
<dbReference type="PROSITE" id="PS51855">
    <property type="entry name" value="MGS"/>
    <property type="match status" value="1"/>
</dbReference>